<feature type="chain" id="PRO_0000250100" description="3-isopropylmalate dehydrogenase">
    <location>
        <begin position="1"/>
        <end position="362"/>
    </location>
</feature>
<feature type="binding site" evidence="1">
    <location>
        <begin position="78"/>
        <end position="91"/>
    </location>
    <ligand>
        <name>NAD(+)</name>
        <dbReference type="ChEBI" id="CHEBI:57540"/>
    </ligand>
</feature>
<feature type="binding site" evidence="1">
    <location>
        <position position="98"/>
    </location>
    <ligand>
        <name>substrate</name>
    </ligand>
</feature>
<feature type="binding site" evidence="1">
    <location>
        <position position="108"/>
    </location>
    <ligand>
        <name>substrate</name>
    </ligand>
</feature>
<feature type="binding site" evidence="1">
    <location>
        <position position="136"/>
    </location>
    <ligand>
        <name>substrate</name>
    </ligand>
</feature>
<feature type="binding site" evidence="1">
    <location>
        <position position="226"/>
    </location>
    <ligand>
        <name>Mg(2+)</name>
        <dbReference type="ChEBI" id="CHEBI:18420"/>
    </ligand>
</feature>
<feature type="binding site" evidence="1">
    <location>
        <position position="226"/>
    </location>
    <ligand>
        <name>substrate</name>
    </ligand>
</feature>
<feature type="binding site" evidence="1">
    <location>
        <position position="250"/>
    </location>
    <ligand>
        <name>Mg(2+)</name>
        <dbReference type="ChEBI" id="CHEBI:18420"/>
    </ligand>
</feature>
<feature type="binding site" evidence="1">
    <location>
        <position position="254"/>
    </location>
    <ligand>
        <name>Mg(2+)</name>
        <dbReference type="ChEBI" id="CHEBI:18420"/>
    </ligand>
</feature>
<feature type="binding site" evidence="1">
    <location>
        <begin position="284"/>
        <end position="296"/>
    </location>
    <ligand>
        <name>NAD(+)</name>
        <dbReference type="ChEBI" id="CHEBI:57540"/>
    </ligand>
</feature>
<feature type="site" description="Important for catalysis" evidence="1">
    <location>
        <position position="143"/>
    </location>
</feature>
<feature type="site" description="Important for catalysis" evidence="1">
    <location>
        <position position="194"/>
    </location>
</feature>
<protein>
    <recommendedName>
        <fullName evidence="1">3-isopropylmalate dehydrogenase</fullName>
        <ecNumber evidence="1">1.1.1.85</ecNumber>
    </recommendedName>
    <alternativeName>
        <fullName evidence="1">3-IPM-DH</fullName>
    </alternativeName>
    <alternativeName>
        <fullName evidence="1">Beta-IPM dehydrogenase</fullName>
        <shortName evidence="1">IMDH</shortName>
    </alternativeName>
</protein>
<proteinExistence type="inferred from homology"/>
<reference key="1">
    <citation type="journal article" date="2014" name="Stand. Genomic Sci.">
        <title>Complete genome sequence of Anabaena variabilis ATCC 29413.</title>
        <authorList>
            <person name="Thiel T."/>
            <person name="Pratte B.S."/>
            <person name="Zhong J."/>
            <person name="Goodwin L."/>
            <person name="Copeland A."/>
            <person name="Lucas S."/>
            <person name="Han C."/>
            <person name="Pitluck S."/>
            <person name="Land M.L."/>
            <person name="Kyrpides N.C."/>
            <person name="Woyke T."/>
        </authorList>
    </citation>
    <scope>NUCLEOTIDE SEQUENCE [LARGE SCALE GENOMIC DNA]</scope>
    <source>
        <strain>ATCC 29413 / PCC 7937</strain>
    </source>
</reference>
<gene>
    <name evidence="1" type="primary">leuB</name>
    <name type="ordered locus">Ava_2987</name>
</gene>
<organism>
    <name type="scientific">Trichormus variabilis (strain ATCC 29413 / PCC 7937)</name>
    <name type="common">Anabaena variabilis</name>
    <dbReference type="NCBI Taxonomy" id="240292"/>
    <lineage>
        <taxon>Bacteria</taxon>
        <taxon>Bacillati</taxon>
        <taxon>Cyanobacteriota</taxon>
        <taxon>Cyanophyceae</taxon>
        <taxon>Nostocales</taxon>
        <taxon>Nostocaceae</taxon>
        <taxon>Trichormus</taxon>
    </lineage>
</organism>
<name>LEU3_TRIV2</name>
<sequence length="362" mass="38849">MTQNYRITLLPGDGIGPEIMAVAVDVLKVVGQQFDIQFDFQEALIGGAAIDATGEPLPSATLDTCRQSDAVLLAAIGGYKWDSLPPHQRPEGGLLGLRAGLELFANLRPAQILPQLIDASTLKREVVEGVDIMVVRELTGGIYFGKPRGIFTTETGEKRGVNTMVYTESEIDRIGRIAFETARKRRGKLCSVDKANVLDVSQLWRDRITKLSQEYPDVELSHLYVDNAAMQLVRAPKQFDTIVTGNLFGDILSDAAAMLTGSIGMLPSASLGASGPGVFEPVHGSAPDIAGLDKANPLAQVLSAAMMLRYALNQPQAADKIEQAVLQVLEQGDRTGDIMSVGMNLLGCRAMGDSLIKALEKS</sequence>
<accession>Q3M8T9</accession>
<keyword id="KW-0028">Amino-acid biosynthesis</keyword>
<keyword id="KW-0100">Branched-chain amino acid biosynthesis</keyword>
<keyword id="KW-0963">Cytoplasm</keyword>
<keyword id="KW-0432">Leucine biosynthesis</keyword>
<keyword id="KW-0460">Magnesium</keyword>
<keyword id="KW-0464">Manganese</keyword>
<keyword id="KW-0479">Metal-binding</keyword>
<keyword id="KW-0520">NAD</keyword>
<keyword id="KW-0560">Oxidoreductase</keyword>
<evidence type="ECO:0000255" key="1">
    <source>
        <dbReference type="HAMAP-Rule" id="MF_01033"/>
    </source>
</evidence>
<dbReference type="EC" id="1.1.1.85" evidence="1"/>
<dbReference type="EMBL" id="CP000117">
    <property type="protein sequence ID" value="ABA22597.1"/>
    <property type="molecule type" value="Genomic_DNA"/>
</dbReference>
<dbReference type="SMR" id="Q3M8T9"/>
<dbReference type="STRING" id="240292.Ava_2987"/>
<dbReference type="KEGG" id="ava:Ava_2987"/>
<dbReference type="eggNOG" id="COG0473">
    <property type="taxonomic scope" value="Bacteria"/>
</dbReference>
<dbReference type="HOGENOM" id="CLU_031953_0_3_3"/>
<dbReference type="UniPathway" id="UPA00048">
    <property type="reaction ID" value="UER00072"/>
</dbReference>
<dbReference type="Proteomes" id="UP000002533">
    <property type="component" value="Chromosome"/>
</dbReference>
<dbReference type="GO" id="GO:0005829">
    <property type="term" value="C:cytosol"/>
    <property type="evidence" value="ECO:0007669"/>
    <property type="project" value="TreeGrafter"/>
</dbReference>
<dbReference type="GO" id="GO:0003862">
    <property type="term" value="F:3-isopropylmalate dehydrogenase activity"/>
    <property type="evidence" value="ECO:0007669"/>
    <property type="project" value="UniProtKB-UniRule"/>
</dbReference>
<dbReference type="GO" id="GO:0000287">
    <property type="term" value="F:magnesium ion binding"/>
    <property type="evidence" value="ECO:0007669"/>
    <property type="project" value="InterPro"/>
</dbReference>
<dbReference type="GO" id="GO:0051287">
    <property type="term" value="F:NAD binding"/>
    <property type="evidence" value="ECO:0007669"/>
    <property type="project" value="InterPro"/>
</dbReference>
<dbReference type="GO" id="GO:0009098">
    <property type="term" value="P:L-leucine biosynthetic process"/>
    <property type="evidence" value="ECO:0007669"/>
    <property type="project" value="UniProtKB-UniRule"/>
</dbReference>
<dbReference type="FunFam" id="3.40.718.10:FF:000004">
    <property type="entry name" value="3-isopropylmalate dehydrogenase"/>
    <property type="match status" value="1"/>
</dbReference>
<dbReference type="Gene3D" id="3.40.718.10">
    <property type="entry name" value="Isopropylmalate Dehydrogenase"/>
    <property type="match status" value="1"/>
</dbReference>
<dbReference type="HAMAP" id="MF_01033">
    <property type="entry name" value="LeuB_type1"/>
    <property type="match status" value="1"/>
</dbReference>
<dbReference type="InterPro" id="IPR019818">
    <property type="entry name" value="IsoCit/isopropylmalate_DH_CS"/>
</dbReference>
<dbReference type="InterPro" id="IPR024084">
    <property type="entry name" value="IsoPropMal-DH-like_dom"/>
</dbReference>
<dbReference type="InterPro" id="IPR004429">
    <property type="entry name" value="Isopropylmalate_DH"/>
</dbReference>
<dbReference type="NCBIfam" id="TIGR00169">
    <property type="entry name" value="leuB"/>
    <property type="match status" value="1"/>
</dbReference>
<dbReference type="PANTHER" id="PTHR42979">
    <property type="entry name" value="3-ISOPROPYLMALATE DEHYDROGENASE"/>
    <property type="match status" value="1"/>
</dbReference>
<dbReference type="PANTHER" id="PTHR42979:SF1">
    <property type="entry name" value="3-ISOPROPYLMALATE DEHYDROGENASE"/>
    <property type="match status" value="1"/>
</dbReference>
<dbReference type="Pfam" id="PF00180">
    <property type="entry name" value="Iso_dh"/>
    <property type="match status" value="1"/>
</dbReference>
<dbReference type="SMART" id="SM01329">
    <property type="entry name" value="Iso_dh"/>
    <property type="match status" value="1"/>
</dbReference>
<dbReference type="SUPFAM" id="SSF53659">
    <property type="entry name" value="Isocitrate/Isopropylmalate dehydrogenase-like"/>
    <property type="match status" value="1"/>
</dbReference>
<dbReference type="PROSITE" id="PS00470">
    <property type="entry name" value="IDH_IMDH"/>
    <property type="match status" value="1"/>
</dbReference>
<comment type="function">
    <text evidence="1">Catalyzes the oxidation of 3-carboxy-2-hydroxy-4-methylpentanoate (3-isopropylmalate) to 3-carboxy-4-methyl-2-oxopentanoate. The product decarboxylates to 4-methyl-2 oxopentanoate.</text>
</comment>
<comment type="catalytic activity">
    <reaction evidence="1">
        <text>(2R,3S)-3-isopropylmalate + NAD(+) = 4-methyl-2-oxopentanoate + CO2 + NADH</text>
        <dbReference type="Rhea" id="RHEA:32271"/>
        <dbReference type="ChEBI" id="CHEBI:16526"/>
        <dbReference type="ChEBI" id="CHEBI:17865"/>
        <dbReference type="ChEBI" id="CHEBI:35121"/>
        <dbReference type="ChEBI" id="CHEBI:57540"/>
        <dbReference type="ChEBI" id="CHEBI:57945"/>
        <dbReference type="EC" id="1.1.1.85"/>
    </reaction>
</comment>
<comment type="cofactor">
    <cofactor evidence="1">
        <name>Mg(2+)</name>
        <dbReference type="ChEBI" id="CHEBI:18420"/>
    </cofactor>
    <cofactor evidence="1">
        <name>Mn(2+)</name>
        <dbReference type="ChEBI" id="CHEBI:29035"/>
    </cofactor>
    <text evidence="1">Binds 1 Mg(2+) or Mn(2+) ion per subunit.</text>
</comment>
<comment type="pathway">
    <text evidence="1">Amino-acid biosynthesis; L-leucine biosynthesis; L-leucine from 3-methyl-2-oxobutanoate: step 3/4.</text>
</comment>
<comment type="subunit">
    <text evidence="1">Homodimer.</text>
</comment>
<comment type="subcellular location">
    <subcellularLocation>
        <location evidence="1">Cytoplasm</location>
    </subcellularLocation>
</comment>
<comment type="similarity">
    <text evidence="1">Belongs to the isocitrate and isopropylmalate dehydrogenases family. LeuB type 1 subfamily.</text>
</comment>